<gene>
    <name type="primary">Gnai2</name>
    <name type="synonym">Gnai-2</name>
</gene>
<accession>P08752</accession>
<accession>Q3TXK7</accession>
<accession>Q6P1C0</accession>
<reference key="1">
    <citation type="journal article" date="1986" name="Proc. Natl. Acad. Sci. U.S.A.">
        <title>Inhibitory and stimulatory G proteins of adenylate cyclase: cDNA and amino acid sequences of the alpha chains.</title>
        <authorList>
            <person name="Sullivan K.A."/>
            <person name="Liao Y.-C."/>
            <person name="Alborzi A."/>
            <person name="Beiderman B."/>
            <person name="Chang F.-H."/>
            <person name="Masters S.B."/>
            <person name="Levinson A.D."/>
            <person name="Bourne H.R."/>
        </authorList>
    </citation>
    <scope>NUCLEOTIDE SEQUENCE [MRNA]</scope>
</reference>
<reference key="2">
    <citation type="journal article" date="2005" name="Science">
        <title>The transcriptional landscape of the mammalian genome.</title>
        <authorList>
            <person name="Carninci P."/>
            <person name="Kasukawa T."/>
            <person name="Katayama S."/>
            <person name="Gough J."/>
            <person name="Frith M.C."/>
            <person name="Maeda N."/>
            <person name="Oyama R."/>
            <person name="Ravasi T."/>
            <person name="Lenhard B."/>
            <person name="Wells C."/>
            <person name="Kodzius R."/>
            <person name="Shimokawa K."/>
            <person name="Bajic V.B."/>
            <person name="Brenner S.E."/>
            <person name="Batalov S."/>
            <person name="Forrest A.R."/>
            <person name="Zavolan M."/>
            <person name="Davis M.J."/>
            <person name="Wilming L.G."/>
            <person name="Aidinis V."/>
            <person name="Allen J.E."/>
            <person name="Ambesi-Impiombato A."/>
            <person name="Apweiler R."/>
            <person name="Aturaliya R.N."/>
            <person name="Bailey T.L."/>
            <person name="Bansal M."/>
            <person name="Baxter L."/>
            <person name="Beisel K.W."/>
            <person name="Bersano T."/>
            <person name="Bono H."/>
            <person name="Chalk A.M."/>
            <person name="Chiu K.P."/>
            <person name="Choudhary V."/>
            <person name="Christoffels A."/>
            <person name="Clutterbuck D.R."/>
            <person name="Crowe M.L."/>
            <person name="Dalla E."/>
            <person name="Dalrymple B.P."/>
            <person name="de Bono B."/>
            <person name="Della Gatta G."/>
            <person name="di Bernardo D."/>
            <person name="Down T."/>
            <person name="Engstrom P."/>
            <person name="Fagiolini M."/>
            <person name="Faulkner G."/>
            <person name="Fletcher C.F."/>
            <person name="Fukushima T."/>
            <person name="Furuno M."/>
            <person name="Futaki S."/>
            <person name="Gariboldi M."/>
            <person name="Georgii-Hemming P."/>
            <person name="Gingeras T.R."/>
            <person name="Gojobori T."/>
            <person name="Green R.E."/>
            <person name="Gustincich S."/>
            <person name="Harbers M."/>
            <person name="Hayashi Y."/>
            <person name="Hensch T.K."/>
            <person name="Hirokawa N."/>
            <person name="Hill D."/>
            <person name="Huminiecki L."/>
            <person name="Iacono M."/>
            <person name="Ikeo K."/>
            <person name="Iwama A."/>
            <person name="Ishikawa T."/>
            <person name="Jakt M."/>
            <person name="Kanapin A."/>
            <person name="Katoh M."/>
            <person name="Kawasawa Y."/>
            <person name="Kelso J."/>
            <person name="Kitamura H."/>
            <person name="Kitano H."/>
            <person name="Kollias G."/>
            <person name="Krishnan S.P."/>
            <person name="Kruger A."/>
            <person name="Kummerfeld S.K."/>
            <person name="Kurochkin I.V."/>
            <person name="Lareau L.F."/>
            <person name="Lazarevic D."/>
            <person name="Lipovich L."/>
            <person name="Liu J."/>
            <person name="Liuni S."/>
            <person name="McWilliam S."/>
            <person name="Madan Babu M."/>
            <person name="Madera M."/>
            <person name="Marchionni L."/>
            <person name="Matsuda H."/>
            <person name="Matsuzawa S."/>
            <person name="Miki H."/>
            <person name="Mignone F."/>
            <person name="Miyake S."/>
            <person name="Morris K."/>
            <person name="Mottagui-Tabar S."/>
            <person name="Mulder N."/>
            <person name="Nakano N."/>
            <person name="Nakauchi H."/>
            <person name="Ng P."/>
            <person name="Nilsson R."/>
            <person name="Nishiguchi S."/>
            <person name="Nishikawa S."/>
            <person name="Nori F."/>
            <person name="Ohara O."/>
            <person name="Okazaki Y."/>
            <person name="Orlando V."/>
            <person name="Pang K.C."/>
            <person name="Pavan W.J."/>
            <person name="Pavesi G."/>
            <person name="Pesole G."/>
            <person name="Petrovsky N."/>
            <person name="Piazza S."/>
            <person name="Reed J."/>
            <person name="Reid J.F."/>
            <person name="Ring B.Z."/>
            <person name="Ringwald M."/>
            <person name="Rost B."/>
            <person name="Ruan Y."/>
            <person name="Salzberg S.L."/>
            <person name="Sandelin A."/>
            <person name="Schneider C."/>
            <person name="Schoenbach C."/>
            <person name="Sekiguchi K."/>
            <person name="Semple C.A."/>
            <person name="Seno S."/>
            <person name="Sessa L."/>
            <person name="Sheng Y."/>
            <person name="Shibata Y."/>
            <person name="Shimada H."/>
            <person name="Shimada K."/>
            <person name="Silva D."/>
            <person name="Sinclair B."/>
            <person name="Sperling S."/>
            <person name="Stupka E."/>
            <person name="Sugiura K."/>
            <person name="Sultana R."/>
            <person name="Takenaka Y."/>
            <person name="Taki K."/>
            <person name="Tammoja K."/>
            <person name="Tan S.L."/>
            <person name="Tang S."/>
            <person name="Taylor M.S."/>
            <person name="Tegner J."/>
            <person name="Teichmann S.A."/>
            <person name="Ueda H.R."/>
            <person name="van Nimwegen E."/>
            <person name="Verardo R."/>
            <person name="Wei C.L."/>
            <person name="Yagi K."/>
            <person name="Yamanishi H."/>
            <person name="Zabarovsky E."/>
            <person name="Zhu S."/>
            <person name="Zimmer A."/>
            <person name="Hide W."/>
            <person name="Bult C."/>
            <person name="Grimmond S.M."/>
            <person name="Teasdale R.D."/>
            <person name="Liu E.T."/>
            <person name="Brusic V."/>
            <person name="Quackenbush J."/>
            <person name="Wahlestedt C."/>
            <person name="Mattick J.S."/>
            <person name="Hume D.A."/>
            <person name="Kai C."/>
            <person name="Sasaki D."/>
            <person name="Tomaru Y."/>
            <person name="Fukuda S."/>
            <person name="Kanamori-Katayama M."/>
            <person name="Suzuki M."/>
            <person name="Aoki J."/>
            <person name="Arakawa T."/>
            <person name="Iida J."/>
            <person name="Imamura K."/>
            <person name="Itoh M."/>
            <person name="Kato T."/>
            <person name="Kawaji H."/>
            <person name="Kawagashira N."/>
            <person name="Kawashima T."/>
            <person name="Kojima M."/>
            <person name="Kondo S."/>
            <person name="Konno H."/>
            <person name="Nakano K."/>
            <person name="Ninomiya N."/>
            <person name="Nishio T."/>
            <person name="Okada M."/>
            <person name="Plessy C."/>
            <person name="Shibata K."/>
            <person name="Shiraki T."/>
            <person name="Suzuki S."/>
            <person name="Tagami M."/>
            <person name="Waki K."/>
            <person name="Watahiki A."/>
            <person name="Okamura-Oho Y."/>
            <person name="Suzuki H."/>
            <person name="Kawai J."/>
            <person name="Hayashizaki Y."/>
        </authorList>
    </citation>
    <scope>NUCLEOTIDE SEQUENCE [LARGE SCALE MRNA]</scope>
    <source>
        <strain>C57BL/6J</strain>
        <tissue>Inner ear</tissue>
        <tissue>Placenta</tissue>
    </source>
</reference>
<reference key="3">
    <citation type="journal article" date="2004" name="Genome Res.">
        <title>The status, quality, and expansion of the NIH full-length cDNA project: the Mammalian Gene Collection (MGC).</title>
        <authorList>
            <consortium name="The MGC Project Team"/>
        </authorList>
    </citation>
    <scope>NUCLEOTIDE SEQUENCE [LARGE SCALE MRNA]</scope>
    <source>
        <strain>C57BL/6J</strain>
        <tissue>Brain</tissue>
    </source>
</reference>
<reference key="4">
    <citation type="journal article" date="1994" name="Brain Res. Mol. Brain Res.">
        <title>G protein Gi2 alpha in the cochlea: cloning and selective occurrence in receptor cells.</title>
        <authorList>
            <person name="Tachibana M."/>
            <person name="Asano T."/>
            <person name="Wilcox E."/>
            <person name="Yokotani N."/>
            <person name="Rivolta M.N."/>
            <person name="Fex J."/>
        </authorList>
    </citation>
    <scope>NUCLEOTIDE SEQUENCE [MRNA] OF 23-355</scope>
</reference>
<reference key="5">
    <citation type="submission" date="2007-04" db="UniProtKB">
        <authorList>
            <person name="Lubec G."/>
            <person name="Kang S.U."/>
        </authorList>
    </citation>
    <scope>PROTEIN SEQUENCE OF 36-46; 55-67; 146-162; 182-193; 199-206; 250-258; 279-296 AND 319-331</scope>
    <scope>IDENTIFICATION BY MASS SPECTROMETRY</scope>
    <source>
        <strain>C57BL/6J</strain>
        <tissue>Brain</tissue>
    </source>
</reference>
<reference key="6">
    <citation type="journal article" date="2010" name="Cell">
        <title>A tissue-specific atlas of mouse protein phosphorylation and expression.</title>
        <authorList>
            <person name="Huttlin E.L."/>
            <person name="Jedrychowski M.P."/>
            <person name="Elias J.E."/>
            <person name="Goswami T."/>
            <person name="Rad R."/>
            <person name="Beausoleil S.A."/>
            <person name="Villen J."/>
            <person name="Haas W."/>
            <person name="Sowa M.E."/>
            <person name="Gygi S.P."/>
        </authorList>
    </citation>
    <scope>IDENTIFICATION BY MASS SPECTROMETRY [LARGE SCALE ANALYSIS]</scope>
    <source>
        <tissue>Brain</tissue>
        <tissue>Brown adipose tissue</tissue>
        <tissue>Heart</tissue>
        <tissue>Kidney</tissue>
        <tissue>Liver</tissue>
        <tissue>Lung</tissue>
        <tissue>Pancreas</tissue>
        <tissue>Spleen</tissue>
        <tissue>Testis</tissue>
    </source>
</reference>
<organism>
    <name type="scientific">Mus musculus</name>
    <name type="common">Mouse</name>
    <dbReference type="NCBI Taxonomy" id="10090"/>
    <lineage>
        <taxon>Eukaryota</taxon>
        <taxon>Metazoa</taxon>
        <taxon>Chordata</taxon>
        <taxon>Craniata</taxon>
        <taxon>Vertebrata</taxon>
        <taxon>Euteleostomi</taxon>
        <taxon>Mammalia</taxon>
        <taxon>Eutheria</taxon>
        <taxon>Euarchontoglires</taxon>
        <taxon>Glires</taxon>
        <taxon>Rodentia</taxon>
        <taxon>Myomorpha</taxon>
        <taxon>Muroidea</taxon>
        <taxon>Muridae</taxon>
        <taxon>Murinae</taxon>
        <taxon>Mus</taxon>
        <taxon>Mus</taxon>
    </lineage>
</organism>
<proteinExistence type="evidence at protein level"/>
<dbReference type="EMBL" id="M13963">
    <property type="protein sequence ID" value="AAA37692.1"/>
    <property type="molecule type" value="mRNA"/>
</dbReference>
<dbReference type="EMBL" id="AK157998">
    <property type="protein sequence ID" value="BAE34308.1"/>
    <property type="molecule type" value="mRNA"/>
</dbReference>
<dbReference type="EMBL" id="AK159222">
    <property type="protein sequence ID" value="BAE34909.1"/>
    <property type="molecule type" value="mRNA"/>
</dbReference>
<dbReference type="EMBL" id="AK167388">
    <property type="protein sequence ID" value="BAE39478.1"/>
    <property type="molecule type" value="mRNA"/>
</dbReference>
<dbReference type="EMBL" id="BC065159">
    <property type="protein sequence ID" value="AAH65159.1"/>
    <property type="molecule type" value="mRNA"/>
</dbReference>
<dbReference type="EMBL" id="S71213">
    <property type="protein sequence ID" value="AAB30632.2"/>
    <property type="molecule type" value="mRNA"/>
</dbReference>
<dbReference type="CCDS" id="CCDS23502.1"/>
<dbReference type="PIR" id="B25889">
    <property type="entry name" value="RGMSI2"/>
</dbReference>
<dbReference type="RefSeq" id="NP_001397114.1">
    <property type="nucleotide sequence ID" value="NM_001410185.1"/>
</dbReference>
<dbReference type="RefSeq" id="NP_032164.2">
    <property type="nucleotide sequence ID" value="NM_008138.4"/>
</dbReference>
<dbReference type="RefSeq" id="XP_006511700.1">
    <property type="nucleotide sequence ID" value="XM_006511637.2"/>
</dbReference>
<dbReference type="SMR" id="P08752"/>
<dbReference type="BioGRID" id="199967">
    <property type="interactions" value="46"/>
</dbReference>
<dbReference type="CORUM" id="P08752"/>
<dbReference type="DIP" id="DIP-605N"/>
<dbReference type="FunCoup" id="P08752">
    <property type="interactions" value="3540"/>
</dbReference>
<dbReference type="IntAct" id="P08752">
    <property type="interactions" value="6"/>
</dbReference>
<dbReference type="STRING" id="10090.ENSMUSP00000057543"/>
<dbReference type="GlyGen" id="P08752">
    <property type="glycosylation" value="2 sites, 1 O-linked glycan (2 sites)"/>
</dbReference>
<dbReference type="iPTMnet" id="P08752"/>
<dbReference type="PhosphoSitePlus" id="P08752"/>
<dbReference type="SwissPalm" id="P08752"/>
<dbReference type="jPOST" id="P08752"/>
<dbReference type="PaxDb" id="10090-ENSMUSP00000057543"/>
<dbReference type="PeptideAtlas" id="P08752"/>
<dbReference type="ProteomicsDB" id="267639"/>
<dbReference type="Pumba" id="P08752"/>
<dbReference type="Antibodypedia" id="2180">
    <property type="antibodies" value="298 antibodies from 35 providers"/>
</dbReference>
<dbReference type="DNASU" id="14678"/>
<dbReference type="Ensembl" id="ENSMUST00000055704.12">
    <property type="protein sequence ID" value="ENSMUSP00000057543.7"/>
    <property type="gene ID" value="ENSMUSG00000032562.14"/>
</dbReference>
<dbReference type="Ensembl" id="ENSMUST00000192615.6">
    <property type="protein sequence ID" value="ENSMUSP00000142326.2"/>
    <property type="gene ID" value="ENSMUSG00000032562.14"/>
</dbReference>
<dbReference type="GeneID" id="14678"/>
<dbReference type="KEGG" id="mmu:14678"/>
<dbReference type="UCSC" id="uc009rml.1">
    <property type="organism name" value="mouse"/>
</dbReference>
<dbReference type="AGR" id="MGI:95772"/>
<dbReference type="CTD" id="2771"/>
<dbReference type="MGI" id="MGI:95772">
    <property type="gene designation" value="Gnai2"/>
</dbReference>
<dbReference type="VEuPathDB" id="HostDB:ENSMUSG00000032562"/>
<dbReference type="eggNOG" id="KOG0082">
    <property type="taxonomic scope" value="Eukaryota"/>
</dbReference>
<dbReference type="GeneTree" id="ENSGT00940000155125"/>
<dbReference type="HOGENOM" id="CLU_014184_6_0_1"/>
<dbReference type="InParanoid" id="P08752"/>
<dbReference type="OMA" id="YMQLQFE"/>
<dbReference type="OrthoDB" id="5817230at2759"/>
<dbReference type="PhylomeDB" id="P08752"/>
<dbReference type="TreeFam" id="TF300673"/>
<dbReference type="Reactome" id="R-MMU-170670">
    <property type="pathway name" value="Adenylate cyclase inhibitory pathway"/>
</dbReference>
<dbReference type="Reactome" id="R-MMU-392170">
    <property type="pathway name" value="ADP signalling through P2Y purinoceptor 12"/>
</dbReference>
<dbReference type="Reactome" id="R-MMU-400042">
    <property type="pathway name" value="Adrenaline,noradrenaline inhibits insulin secretion"/>
</dbReference>
<dbReference type="Reactome" id="R-MMU-418594">
    <property type="pathway name" value="G alpha (i) signalling events"/>
</dbReference>
<dbReference type="Reactome" id="R-MMU-9009391">
    <property type="pathway name" value="Extra-nuclear estrogen signaling"/>
</dbReference>
<dbReference type="BioGRID-ORCS" id="14678">
    <property type="hits" value="3 hits in 81 CRISPR screens"/>
</dbReference>
<dbReference type="CD-CODE" id="01CA17F3">
    <property type="entry name" value="Centrosome"/>
</dbReference>
<dbReference type="CD-CODE" id="CE726F99">
    <property type="entry name" value="Postsynaptic density"/>
</dbReference>
<dbReference type="ChiTaRS" id="Gnai2">
    <property type="organism name" value="mouse"/>
</dbReference>
<dbReference type="PRO" id="PR:P08752"/>
<dbReference type="Proteomes" id="UP000000589">
    <property type="component" value="Chromosome 9"/>
</dbReference>
<dbReference type="RNAct" id="P08752">
    <property type="molecule type" value="protein"/>
</dbReference>
<dbReference type="Bgee" id="ENSMUSG00000032562">
    <property type="expression patterns" value="Expressed in ileal epithelium and 291 other cell types or tissues"/>
</dbReference>
<dbReference type="ExpressionAtlas" id="P08752">
    <property type="expression patterns" value="baseline and differential"/>
</dbReference>
<dbReference type="GO" id="GO:0044297">
    <property type="term" value="C:cell body"/>
    <property type="evidence" value="ECO:0000314"/>
    <property type="project" value="MGI"/>
</dbReference>
<dbReference type="GO" id="GO:0005813">
    <property type="term" value="C:centrosome"/>
    <property type="evidence" value="ECO:0000250"/>
    <property type="project" value="UniProtKB"/>
</dbReference>
<dbReference type="GO" id="GO:0036064">
    <property type="term" value="C:ciliary basal body"/>
    <property type="evidence" value="ECO:0007669"/>
    <property type="project" value="Ensembl"/>
</dbReference>
<dbReference type="GO" id="GO:0005737">
    <property type="term" value="C:cytoplasm"/>
    <property type="evidence" value="ECO:0000250"/>
    <property type="project" value="UniProtKB"/>
</dbReference>
<dbReference type="GO" id="GO:0005829">
    <property type="term" value="C:cytosol"/>
    <property type="evidence" value="ECO:0007669"/>
    <property type="project" value="Ensembl"/>
</dbReference>
<dbReference type="GO" id="GO:0030425">
    <property type="term" value="C:dendrite"/>
    <property type="evidence" value="ECO:0000314"/>
    <property type="project" value="MGI"/>
</dbReference>
<dbReference type="GO" id="GO:0098686">
    <property type="term" value="C:hippocampal mossy fiber to CA3 synapse"/>
    <property type="evidence" value="ECO:0000314"/>
    <property type="project" value="SynGO"/>
</dbReference>
<dbReference type="GO" id="GO:0030496">
    <property type="term" value="C:midbody"/>
    <property type="evidence" value="ECO:0000250"/>
    <property type="project" value="UniProtKB"/>
</dbReference>
<dbReference type="GO" id="GO:0098992">
    <property type="term" value="C:neuronal dense core vesicle"/>
    <property type="evidence" value="ECO:0000314"/>
    <property type="project" value="SynGO"/>
</dbReference>
<dbReference type="GO" id="GO:0005654">
    <property type="term" value="C:nucleoplasm"/>
    <property type="evidence" value="ECO:0007669"/>
    <property type="project" value="Ensembl"/>
</dbReference>
<dbReference type="GO" id="GO:0005886">
    <property type="term" value="C:plasma membrane"/>
    <property type="evidence" value="ECO:0000250"/>
    <property type="project" value="UniProtKB"/>
</dbReference>
<dbReference type="GO" id="GO:0031683">
    <property type="term" value="F:G-protein beta/gamma-subunit complex binding"/>
    <property type="evidence" value="ECO:0007669"/>
    <property type="project" value="InterPro"/>
</dbReference>
<dbReference type="GO" id="GO:0005525">
    <property type="term" value="F:GTP binding"/>
    <property type="evidence" value="ECO:0000247"/>
    <property type="project" value="MGI"/>
</dbReference>
<dbReference type="GO" id="GO:0003924">
    <property type="term" value="F:GTPase activity"/>
    <property type="evidence" value="ECO:0007669"/>
    <property type="project" value="InterPro"/>
</dbReference>
<dbReference type="GO" id="GO:0046872">
    <property type="term" value="F:metal ion binding"/>
    <property type="evidence" value="ECO:0007669"/>
    <property type="project" value="UniProtKB-KW"/>
</dbReference>
<dbReference type="GO" id="GO:0007189">
    <property type="term" value="P:adenylate cyclase-activating G protein-coupled receptor signaling pathway"/>
    <property type="evidence" value="ECO:0007669"/>
    <property type="project" value="Ensembl"/>
</dbReference>
<dbReference type="GO" id="GO:0007193">
    <property type="term" value="P:adenylate cyclase-inhibiting G protein-coupled receptor signaling pathway"/>
    <property type="evidence" value="ECO:0000315"/>
    <property type="project" value="MGI"/>
</dbReference>
<dbReference type="GO" id="GO:0051301">
    <property type="term" value="P:cell division"/>
    <property type="evidence" value="ECO:0000250"/>
    <property type="project" value="UniProtKB"/>
</dbReference>
<dbReference type="GO" id="GO:0008283">
    <property type="term" value="P:cell population proliferation"/>
    <property type="evidence" value="ECO:0000353"/>
    <property type="project" value="MGI"/>
</dbReference>
<dbReference type="GO" id="GO:0007213">
    <property type="term" value="P:G protein-coupled acetylcholine receptor signaling pathway"/>
    <property type="evidence" value="ECO:0000315"/>
    <property type="project" value="MGI"/>
</dbReference>
<dbReference type="GO" id="GO:0001973">
    <property type="term" value="P:G protein-coupled adenosine receptor signaling pathway"/>
    <property type="evidence" value="ECO:0007669"/>
    <property type="project" value="Ensembl"/>
</dbReference>
<dbReference type="GO" id="GO:0007214">
    <property type="term" value="P:gamma-aminobutyric acid signaling pathway"/>
    <property type="evidence" value="ECO:0007669"/>
    <property type="project" value="Ensembl"/>
</dbReference>
<dbReference type="GO" id="GO:0050804">
    <property type="term" value="P:modulation of chemical synaptic transmission"/>
    <property type="evidence" value="ECO:0000314"/>
    <property type="project" value="SynGO"/>
</dbReference>
<dbReference type="GO" id="GO:0071878">
    <property type="term" value="P:negative regulation of adenylate cyclase-activating adrenergic receptor signaling pathway"/>
    <property type="evidence" value="ECO:0007669"/>
    <property type="project" value="Ensembl"/>
</dbReference>
<dbReference type="GO" id="GO:2001234">
    <property type="term" value="P:negative regulation of apoptotic signaling pathway"/>
    <property type="evidence" value="ECO:0007669"/>
    <property type="project" value="Ensembl"/>
</dbReference>
<dbReference type="GO" id="GO:0045955">
    <property type="term" value="P:negative regulation of calcium ion-dependent exocytosis"/>
    <property type="evidence" value="ECO:0007669"/>
    <property type="project" value="Ensembl"/>
</dbReference>
<dbReference type="GO" id="GO:0050805">
    <property type="term" value="P:negative regulation of synaptic transmission"/>
    <property type="evidence" value="ECO:0007669"/>
    <property type="project" value="Ensembl"/>
</dbReference>
<dbReference type="GO" id="GO:0030335">
    <property type="term" value="P:positive regulation of cell migration"/>
    <property type="evidence" value="ECO:0007669"/>
    <property type="project" value="Ensembl"/>
</dbReference>
<dbReference type="GO" id="GO:0070374">
    <property type="term" value="P:positive regulation of ERK1 and ERK2 cascade"/>
    <property type="evidence" value="ECO:0007669"/>
    <property type="project" value="Ensembl"/>
</dbReference>
<dbReference type="GO" id="GO:2000179">
    <property type="term" value="P:positive regulation of neural precursor cell proliferation"/>
    <property type="evidence" value="ECO:0007669"/>
    <property type="project" value="Ensembl"/>
</dbReference>
<dbReference type="GO" id="GO:0032930">
    <property type="term" value="P:positive regulation of superoxide anion generation"/>
    <property type="evidence" value="ECO:0007669"/>
    <property type="project" value="Ensembl"/>
</dbReference>
<dbReference type="GO" id="GO:0035810">
    <property type="term" value="P:positive regulation of urine volume"/>
    <property type="evidence" value="ECO:0007669"/>
    <property type="project" value="Ensembl"/>
</dbReference>
<dbReference type="GO" id="GO:1904707">
    <property type="term" value="P:positive regulation of vascular associated smooth muscle cell proliferation"/>
    <property type="evidence" value="ECO:0007669"/>
    <property type="project" value="Ensembl"/>
</dbReference>
<dbReference type="GO" id="GO:0051924">
    <property type="term" value="P:regulation of calcium ion transport"/>
    <property type="evidence" value="ECO:0007669"/>
    <property type="project" value="Ensembl"/>
</dbReference>
<dbReference type="CDD" id="cd00066">
    <property type="entry name" value="G-alpha"/>
    <property type="match status" value="1"/>
</dbReference>
<dbReference type="FunFam" id="1.10.400.10:FF:000001">
    <property type="entry name" value="Guanine nucleotide-binding protein G(I) subunit alpha"/>
    <property type="match status" value="1"/>
</dbReference>
<dbReference type="FunFam" id="3.40.50.300:FF:002487">
    <property type="entry name" value="Guanine nucleotide-binding protein G(i) subunit alpha-1"/>
    <property type="match status" value="1"/>
</dbReference>
<dbReference type="FunFam" id="3.40.50.300:FF:003559">
    <property type="entry name" value="Guanine nucleotide-binding protein G(i) subunit alpha-1"/>
    <property type="match status" value="1"/>
</dbReference>
<dbReference type="Gene3D" id="1.10.400.10">
    <property type="entry name" value="GI Alpha 1, domain 2-like"/>
    <property type="match status" value="1"/>
</dbReference>
<dbReference type="Gene3D" id="3.40.50.300">
    <property type="entry name" value="P-loop containing nucleotide triphosphate hydrolases"/>
    <property type="match status" value="1"/>
</dbReference>
<dbReference type="InterPro" id="IPR001408">
    <property type="entry name" value="Gprotein_alpha_I"/>
</dbReference>
<dbReference type="InterPro" id="IPR001019">
    <property type="entry name" value="Gprotein_alpha_su"/>
</dbReference>
<dbReference type="InterPro" id="IPR011025">
    <property type="entry name" value="GproteinA_insert"/>
</dbReference>
<dbReference type="InterPro" id="IPR027417">
    <property type="entry name" value="P-loop_NTPase"/>
</dbReference>
<dbReference type="PANTHER" id="PTHR10218">
    <property type="entry name" value="GTP-BINDING PROTEIN ALPHA SUBUNIT"/>
    <property type="match status" value="1"/>
</dbReference>
<dbReference type="PANTHER" id="PTHR10218:SF73">
    <property type="entry name" value="GUANINE NUCLEOTIDE-BINDING PROTEIN G(I) SUBUNIT ALPHA-2"/>
    <property type="match status" value="1"/>
</dbReference>
<dbReference type="Pfam" id="PF00503">
    <property type="entry name" value="G-alpha"/>
    <property type="match status" value="1"/>
</dbReference>
<dbReference type="PRINTS" id="PR00318">
    <property type="entry name" value="GPROTEINA"/>
</dbReference>
<dbReference type="PRINTS" id="PR00441">
    <property type="entry name" value="GPROTEINAI"/>
</dbReference>
<dbReference type="SMART" id="SM00275">
    <property type="entry name" value="G_alpha"/>
    <property type="match status" value="1"/>
</dbReference>
<dbReference type="SUPFAM" id="SSF52540">
    <property type="entry name" value="P-loop containing nucleoside triphosphate hydrolases"/>
    <property type="match status" value="1"/>
</dbReference>
<dbReference type="SUPFAM" id="SSF47895">
    <property type="entry name" value="Transducin (alpha subunit), insertion domain"/>
    <property type="match status" value="1"/>
</dbReference>
<dbReference type="PROSITE" id="PS51882">
    <property type="entry name" value="G_ALPHA"/>
    <property type="match status" value="1"/>
</dbReference>
<feature type="initiator methionine" description="Removed" evidence="3">
    <location>
        <position position="1"/>
    </location>
</feature>
<feature type="chain" id="PRO_0000203681" description="Guanine nucleotide-binding protein G(i) subunit alpha-2">
    <location>
        <begin position="2"/>
        <end position="355"/>
    </location>
</feature>
<feature type="domain" description="G-alpha" evidence="4">
    <location>
        <begin position="32"/>
        <end position="355"/>
    </location>
</feature>
<feature type="region of interest" description="G1 motif" evidence="4">
    <location>
        <begin position="35"/>
        <end position="48"/>
    </location>
</feature>
<feature type="region of interest" description="G2 motif" evidence="4">
    <location>
        <begin position="174"/>
        <end position="182"/>
    </location>
</feature>
<feature type="region of interest" description="G3 motif" evidence="4">
    <location>
        <begin position="197"/>
        <end position="206"/>
    </location>
</feature>
<feature type="region of interest" description="G4 motif" evidence="4">
    <location>
        <begin position="266"/>
        <end position="273"/>
    </location>
</feature>
<feature type="region of interest" description="G5 motif" evidence="4">
    <location>
        <begin position="325"/>
        <end position="330"/>
    </location>
</feature>
<feature type="binding site" evidence="1">
    <location>
        <begin position="40"/>
        <end position="47"/>
    </location>
    <ligand>
        <name>GTP</name>
        <dbReference type="ChEBI" id="CHEBI:37565"/>
    </ligand>
</feature>
<feature type="binding site" evidence="1">
    <location>
        <position position="47"/>
    </location>
    <ligand>
        <name>Mg(2+)</name>
        <dbReference type="ChEBI" id="CHEBI:18420"/>
    </ligand>
</feature>
<feature type="binding site" evidence="1">
    <location>
        <begin position="176"/>
        <end position="182"/>
    </location>
    <ligand>
        <name>GTP</name>
        <dbReference type="ChEBI" id="CHEBI:37565"/>
    </ligand>
</feature>
<feature type="binding site" evidence="1">
    <location>
        <position position="182"/>
    </location>
    <ligand>
        <name>Mg(2+)</name>
        <dbReference type="ChEBI" id="CHEBI:18420"/>
    </ligand>
</feature>
<feature type="binding site" evidence="1">
    <location>
        <begin position="201"/>
        <end position="205"/>
    </location>
    <ligand>
        <name>GTP</name>
        <dbReference type="ChEBI" id="CHEBI:37565"/>
    </ligand>
</feature>
<feature type="binding site" evidence="1">
    <location>
        <begin position="270"/>
        <end position="273"/>
    </location>
    <ligand>
        <name>GTP</name>
        <dbReference type="ChEBI" id="CHEBI:37565"/>
    </ligand>
</feature>
<feature type="binding site" evidence="1">
    <location>
        <position position="327"/>
    </location>
    <ligand>
        <name>GTP</name>
        <dbReference type="ChEBI" id="CHEBI:37565"/>
    </ligand>
</feature>
<feature type="lipid moiety-binding region" description="N-myristoyl glycine" evidence="3">
    <location>
        <position position="2"/>
    </location>
</feature>
<feature type="lipid moiety-binding region" description="S-palmitoyl cysteine" evidence="1">
    <location>
        <position position="3"/>
    </location>
</feature>
<feature type="sequence conflict" description="In Ref. 4; AAB30632." evidence="5" ref="4">
    <original>M</original>
    <variation>I</variation>
    <location>
        <position position="82"/>
    </location>
</feature>
<feature type="sequence conflict" description="In Ref. 1; AAA37692." evidence="5" ref="1">
    <original>M</original>
    <variation>L</variation>
    <location>
        <position position="82"/>
    </location>
</feature>
<feature type="sequence conflict" description="In Ref. 1; AAA37692." evidence="5" ref="1">
    <original>A</original>
    <variation>R</variation>
    <location>
        <position position="87"/>
    </location>
</feature>
<evidence type="ECO:0000250" key="1"/>
<evidence type="ECO:0000250" key="2">
    <source>
        <dbReference type="UniProtKB" id="P04897"/>
    </source>
</evidence>
<evidence type="ECO:0000250" key="3">
    <source>
        <dbReference type="UniProtKB" id="P04899"/>
    </source>
</evidence>
<evidence type="ECO:0000255" key="4">
    <source>
        <dbReference type="PROSITE-ProRule" id="PRU01230"/>
    </source>
</evidence>
<evidence type="ECO:0000305" key="5"/>
<sequence length="355" mass="40489">MGCTVSAEDKAAAERSKMIDKNLREDGEKAAREVKLLLLGAGESGKSTIVKQMKIIHEDGYSEEECRQYRAVVYSNTIQSIMAIVKAMGNLQIDFADPQRADDARQLFALSCAAEEQGMLPEDLSGVIRRLWADHGVQACFGRSREYQLNDSAAYYLNDLERIAQSDYIPTQQDVLRTRVKTTGIVETHFTFKDLHFKMFDVGGQRSERKKWIHCFEGVTAIIFCVALSAYDLVLAEDEEMNRMHESMKLFDSICNNKWFTDTSIILFLNKKDLFEEKITQSSLTICFPEYTGANKYDEAASYIQSKFEDLNKRKDTKEIYTHFTCATDTKNVQFVFDAVTDVIIKNNLKDCGLF</sequence>
<protein>
    <recommendedName>
        <fullName>Guanine nucleotide-binding protein G(i) subunit alpha-2</fullName>
    </recommendedName>
    <alternativeName>
        <fullName>Adenylate cyclase-inhibiting G alpha protein</fullName>
    </alternativeName>
</protein>
<comment type="function">
    <text>Guanine nucleotide-binding proteins (G proteins) are involved as modulators or transducers in various transmembrane signaling systems. The G(i) proteins are involved in hormonal regulation of adenylate cyclase: they inhibit the cyclase in response to beta-adrenergic stimuli. May play a role in cell division.</text>
</comment>
<comment type="subunit">
    <text evidence="2 3">G proteins are composed of 3 units; alpha, beta and gamma. The alpha chain contains the guanine nucleotide binding site. In this context, interacts with GNB2 (By similarity). Interacts with UNC5B (By similarity). Interacts with GPSM1 (By similarity). Interacts with RGS12 and RGS14 (By similarity). Interacts (inactive GDP-bound form) with NUCB1 (via GBA motif); the interaction leads to activation of GNAI3 (By similarity). Interacts (inactive GDP-bound form) with CCDC88C/DAPLE (via GBA motif) (By similarity). Interacts (inactive GDP-bound form) with CCDC8A/GIV (via GBA motif) (By similarity). Interacts with CXCR1 and CXCR2 (By similarity).</text>
</comment>
<comment type="subcellular location">
    <subcellularLocation>
        <location evidence="1">Cytoplasm</location>
    </subcellularLocation>
    <subcellularLocation>
        <location evidence="1">Cytoplasm</location>
        <location evidence="1">Cytoskeleton</location>
        <location evidence="1">Microtubule organizing center</location>
        <location evidence="1">Centrosome</location>
    </subcellularLocation>
    <subcellularLocation>
        <location evidence="1">Cell membrane</location>
    </subcellularLocation>
    <subcellularLocation>
        <location evidence="3">Membrane</location>
        <topology evidence="3">Lipid-anchor</topology>
    </subcellularLocation>
    <text evidence="1">Localizes in the centrosomes of interphase and mitotic cells. Detected at the cleavage furrow and/or the midbody (By similarity).</text>
</comment>
<comment type="similarity">
    <text evidence="5">Belongs to the G-alpha family. G(i/o/t/z) subfamily.</text>
</comment>
<keyword id="KW-0131">Cell cycle</keyword>
<keyword id="KW-0132">Cell division</keyword>
<keyword id="KW-1003">Cell membrane</keyword>
<keyword id="KW-0963">Cytoplasm</keyword>
<keyword id="KW-0206">Cytoskeleton</keyword>
<keyword id="KW-0903">Direct protein sequencing</keyword>
<keyword id="KW-0342">GTP-binding</keyword>
<keyword id="KW-0449">Lipoprotein</keyword>
<keyword id="KW-0460">Magnesium</keyword>
<keyword id="KW-0472">Membrane</keyword>
<keyword id="KW-0479">Metal-binding</keyword>
<keyword id="KW-0519">Myristate</keyword>
<keyword id="KW-0547">Nucleotide-binding</keyword>
<keyword id="KW-0564">Palmitate</keyword>
<keyword id="KW-1185">Reference proteome</keyword>
<keyword id="KW-0807">Transducer</keyword>
<name>GNAI2_MOUSE</name>